<gene>
    <name evidence="1" type="primary">murC</name>
    <name type="ordered locus">EC55989_0087</name>
</gene>
<evidence type="ECO:0000255" key="1">
    <source>
        <dbReference type="HAMAP-Rule" id="MF_00046"/>
    </source>
</evidence>
<sequence length="491" mass="53598">MNTQQLAKLRSIVPEMRRVRHIHFVGIGGAGMGGIAEVLANEGYQISGSDLAPNPVTQQLMNLGATIYFNHRPENVRDASVVVVSSAISADNPEIVAAHEARIPVIRRAEMLAELMRFRHGIAIAGTHGKTTTTAMVSSIYAEAGLDPTFVNGGLVKAAGVHARLGHGRYLIAEADESDASFLHLQPMVAIVTNIEADHMDTYQGDFENLKQTFINFLHNLPFYGRAVMCVDDPVIRELLPRVGRQTTTYGFSEDADVRVEDYQQIGPQGHFTLLRQDKEPMRVTLNAPGRHNALNAAAAVAVATEEGIDDEAILRALESFQGTGRRFDFLGEFPLEPVNGKSGTAMLVDDYGHHPTEVDATIKAARAGWPDKNLVMLFQPHRFTRTRDLYDDFANVLTQVDTLLMLEVYPAGEAPIPGADSRSLCRTIRGRGKIDPILVPDPAQVAEMLAPVLTGNDLILVQGAGNIGKIARSLAEIKLKPQTPEEEQHD</sequence>
<dbReference type="EC" id="6.3.2.8" evidence="1"/>
<dbReference type="EMBL" id="CU928145">
    <property type="protein sequence ID" value="CAU95975.1"/>
    <property type="molecule type" value="Genomic_DNA"/>
</dbReference>
<dbReference type="RefSeq" id="WP_001096048.1">
    <property type="nucleotide sequence ID" value="NZ_CP028304.1"/>
</dbReference>
<dbReference type="SMR" id="B7LFW1"/>
<dbReference type="GeneID" id="75169991"/>
<dbReference type="KEGG" id="eck:EC55989_0087"/>
<dbReference type="HOGENOM" id="CLU_028104_2_2_6"/>
<dbReference type="UniPathway" id="UPA00219"/>
<dbReference type="Proteomes" id="UP000000746">
    <property type="component" value="Chromosome"/>
</dbReference>
<dbReference type="GO" id="GO:0005737">
    <property type="term" value="C:cytoplasm"/>
    <property type="evidence" value="ECO:0007669"/>
    <property type="project" value="UniProtKB-SubCell"/>
</dbReference>
<dbReference type="GO" id="GO:0005524">
    <property type="term" value="F:ATP binding"/>
    <property type="evidence" value="ECO:0007669"/>
    <property type="project" value="UniProtKB-UniRule"/>
</dbReference>
<dbReference type="GO" id="GO:0008763">
    <property type="term" value="F:UDP-N-acetylmuramate-L-alanine ligase activity"/>
    <property type="evidence" value="ECO:0007669"/>
    <property type="project" value="UniProtKB-UniRule"/>
</dbReference>
<dbReference type="GO" id="GO:0051301">
    <property type="term" value="P:cell division"/>
    <property type="evidence" value="ECO:0007669"/>
    <property type="project" value="UniProtKB-KW"/>
</dbReference>
<dbReference type="GO" id="GO:0071555">
    <property type="term" value="P:cell wall organization"/>
    <property type="evidence" value="ECO:0007669"/>
    <property type="project" value="UniProtKB-KW"/>
</dbReference>
<dbReference type="GO" id="GO:0009252">
    <property type="term" value="P:peptidoglycan biosynthetic process"/>
    <property type="evidence" value="ECO:0007669"/>
    <property type="project" value="UniProtKB-UniRule"/>
</dbReference>
<dbReference type="GO" id="GO:0008360">
    <property type="term" value="P:regulation of cell shape"/>
    <property type="evidence" value="ECO:0007669"/>
    <property type="project" value="UniProtKB-KW"/>
</dbReference>
<dbReference type="FunFam" id="3.40.1190.10:FF:000001">
    <property type="entry name" value="UDP-N-acetylmuramate--L-alanine ligase"/>
    <property type="match status" value="1"/>
</dbReference>
<dbReference type="FunFam" id="3.40.50.720:FF:000046">
    <property type="entry name" value="UDP-N-acetylmuramate--L-alanine ligase"/>
    <property type="match status" value="1"/>
</dbReference>
<dbReference type="FunFam" id="3.90.190.20:FF:000001">
    <property type="entry name" value="UDP-N-acetylmuramate--L-alanine ligase"/>
    <property type="match status" value="1"/>
</dbReference>
<dbReference type="Gene3D" id="3.90.190.20">
    <property type="entry name" value="Mur ligase, C-terminal domain"/>
    <property type="match status" value="1"/>
</dbReference>
<dbReference type="Gene3D" id="3.40.1190.10">
    <property type="entry name" value="Mur-like, catalytic domain"/>
    <property type="match status" value="1"/>
</dbReference>
<dbReference type="Gene3D" id="3.40.50.720">
    <property type="entry name" value="NAD(P)-binding Rossmann-like Domain"/>
    <property type="match status" value="1"/>
</dbReference>
<dbReference type="HAMAP" id="MF_00046">
    <property type="entry name" value="MurC"/>
    <property type="match status" value="1"/>
</dbReference>
<dbReference type="InterPro" id="IPR036565">
    <property type="entry name" value="Mur-like_cat_sf"/>
</dbReference>
<dbReference type="InterPro" id="IPR004101">
    <property type="entry name" value="Mur_ligase_C"/>
</dbReference>
<dbReference type="InterPro" id="IPR036615">
    <property type="entry name" value="Mur_ligase_C_dom_sf"/>
</dbReference>
<dbReference type="InterPro" id="IPR013221">
    <property type="entry name" value="Mur_ligase_cen"/>
</dbReference>
<dbReference type="InterPro" id="IPR000713">
    <property type="entry name" value="Mur_ligase_N"/>
</dbReference>
<dbReference type="InterPro" id="IPR050061">
    <property type="entry name" value="MurCDEF_pg_biosynth"/>
</dbReference>
<dbReference type="InterPro" id="IPR005758">
    <property type="entry name" value="UDP-N-AcMur_Ala_ligase_MurC"/>
</dbReference>
<dbReference type="NCBIfam" id="TIGR01082">
    <property type="entry name" value="murC"/>
    <property type="match status" value="1"/>
</dbReference>
<dbReference type="PANTHER" id="PTHR43445:SF3">
    <property type="entry name" value="UDP-N-ACETYLMURAMATE--L-ALANINE LIGASE"/>
    <property type="match status" value="1"/>
</dbReference>
<dbReference type="PANTHER" id="PTHR43445">
    <property type="entry name" value="UDP-N-ACETYLMURAMATE--L-ALANINE LIGASE-RELATED"/>
    <property type="match status" value="1"/>
</dbReference>
<dbReference type="Pfam" id="PF01225">
    <property type="entry name" value="Mur_ligase"/>
    <property type="match status" value="1"/>
</dbReference>
<dbReference type="Pfam" id="PF02875">
    <property type="entry name" value="Mur_ligase_C"/>
    <property type="match status" value="1"/>
</dbReference>
<dbReference type="Pfam" id="PF08245">
    <property type="entry name" value="Mur_ligase_M"/>
    <property type="match status" value="1"/>
</dbReference>
<dbReference type="SUPFAM" id="SSF51984">
    <property type="entry name" value="MurCD N-terminal domain"/>
    <property type="match status" value="1"/>
</dbReference>
<dbReference type="SUPFAM" id="SSF53623">
    <property type="entry name" value="MurD-like peptide ligases, catalytic domain"/>
    <property type="match status" value="1"/>
</dbReference>
<dbReference type="SUPFAM" id="SSF53244">
    <property type="entry name" value="MurD-like peptide ligases, peptide-binding domain"/>
    <property type="match status" value="1"/>
</dbReference>
<comment type="function">
    <text evidence="1">Cell wall formation.</text>
</comment>
<comment type="catalytic activity">
    <reaction evidence="1">
        <text>UDP-N-acetyl-alpha-D-muramate + L-alanine + ATP = UDP-N-acetyl-alpha-D-muramoyl-L-alanine + ADP + phosphate + H(+)</text>
        <dbReference type="Rhea" id="RHEA:23372"/>
        <dbReference type="ChEBI" id="CHEBI:15378"/>
        <dbReference type="ChEBI" id="CHEBI:30616"/>
        <dbReference type="ChEBI" id="CHEBI:43474"/>
        <dbReference type="ChEBI" id="CHEBI:57972"/>
        <dbReference type="ChEBI" id="CHEBI:70757"/>
        <dbReference type="ChEBI" id="CHEBI:83898"/>
        <dbReference type="ChEBI" id="CHEBI:456216"/>
        <dbReference type="EC" id="6.3.2.8"/>
    </reaction>
</comment>
<comment type="pathway">
    <text evidence="1">Cell wall biogenesis; peptidoglycan biosynthesis.</text>
</comment>
<comment type="subcellular location">
    <subcellularLocation>
        <location evidence="1">Cytoplasm</location>
    </subcellularLocation>
</comment>
<comment type="similarity">
    <text evidence="1">Belongs to the MurCDEF family.</text>
</comment>
<protein>
    <recommendedName>
        <fullName evidence="1">UDP-N-acetylmuramate--L-alanine ligase</fullName>
        <ecNumber evidence="1">6.3.2.8</ecNumber>
    </recommendedName>
    <alternativeName>
        <fullName evidence="1">UDP-N-acetylmuramoyl-L-alanine synthetase</fullName>
    </alternativeName>
</protein>
<name>MURC_ECO55</name>
<accession>B7LFW1</accession>
<keyword id="KW-0067">ATP-binding</keyword>
<keyword id="KW-0131">Cell cycle</keyword>
<keyword id="KW-0132">Cell division</keyword>
<keyword id="KW-0133">Cell shape</keyword>
<keyword id="KW-0961">Cell wall biogenesis/degradation</keyword>
<keyword id="KW-0963">Cytoplasm</keyword>
<keyword id="KW-0436">Ligase</keyword>
<keyword id="KW-0547">Nucleotide-binding</keyword>
<keyword id="KW-0573">Peptidoglycan synthesis</keyword>
<keyword id="KW-1185">Reference proteome</keyword>
<organism>
    <name type="scientific">Escherichia coli (strain 55989 / EAEC)</name>
    <dbReference type="NCBI Taxonomy" id="585055"/>
    <lineage>
        <taxon>Bacteria</taxon>
        <taxon>Pseudomonadati</taxon>
        <taxon>Pseudomonadota</taxon>
        <taxon>Gammaproteobacteria</taxon>
        <taxon>Enterobacterales</taxon>
        <taxon>Enterobacteriaceae</taxon>
        <taxon>Escherichia</taxon>
    </lineage>
</organism>
<feature type="chain" id="PRO_1000117412" description="UDP-N-acetylmuramate--L-alanine ligase">
    <location>
        <begin position="1"/>
        <end position="491"/>
    </location>
</feature>
<feature type="binding site" evidence="1">
    <location>
        <begin position="126"/>
        <end position="132"/>
    </location>
    <ligand>
        <name>ATP</name>
        <dbReference type="ChEBI" id="CHEBI:30616"/>
    </ligand>
</feature>
<proteinExistence type="inferred from homology"/>
<reference key="1">
    <citation type="journal article" date="2009" name="PLoS Genet.">
        <title>Organised genome dynamics in the Escherichia coli species results in highly diverse adaptive paths.</title>
        <authorList>
            <person name="Touchon M."/>
            <person name="Hoede C."/>
            <person name="Tenaillon O."/>
            <person name="Barbe V."/>
            <person name="Baeriswyl S."/>
            <person name="Bidet P."/>
            <person name="Bingen E."/>
            <person name="Bonacorsi S."/>
            <person name="Bouchier C."/>
            <person name="Bouvet O."/>
            <person name="Calteau A."/>
            <person name="Chiapello H."/>
            <person name="Clermont O."/>
            <person name="Cruveiller S."/>
            <person name="Danchin A."/>
            <person name="Diard M."/>
            <person name="Dossat C."/>
            <person name="Karoui M.E."/>
            <person name="Frapy E."/>
            <person name="Garry L."/>
            <person name="Ghigo J.M."/>
            <person name="Gilles A.M."/>
            <person name="Johnson J."/>
            <person name="Le Bouguenec C."/>
            <person name="Lescat M."/>
            <person name="Mangenot S."/>
            <person name="Martinez-Jehanne V."/>
            <person name="Matic I."/>
            <person name="Nassif X."/>
            <person name="Oztas S."/>
            <person name="Petit M.A."/>
            <person name="Pichon C."/>
            <person name="Rouy Z."/>
            <person name="Ruf C.S."/>
            <person name="Schneider D."/>
            <person name="Tourret J."/>
            <person name="Vacherie B."/>
            <person name="Vallenet D."/>
            <person name="Medigue C."/>
            <person name="Rocha E.P.C."/>
            <person name="Denamur E."/>
        </authorList>
    </citation>
    <scope>NUCLEOTIDE SEQUENCE [LARGE SCALE GENOMIC DNA]</scope>
    <source>
        <strain>55989 / EAEC</strain>
    </source>
</reference>